<dbReference type="EMBL" id="CU633749">
    <property type="protein sequence ID" value="CAQ69226.1"/>
    <property type="molecule type" value="Genomic_DNA"/>
</dbReference>
<dbReference type="RefSeq" id="WP_008650487.1">
    <property type="nucleotide sequence ID" value="NC_010528.1"/>
</dbReference>
<dbReference type="SMR" id="B3R4J4"/>
<dbReference type="GeneID" id="92820071"/>
<dbReference type="KEGG" id="cti:RALTA_A1264"/>
<dbReference type="eggNOG" id="COG0292">
    <property type="taxonomic scope" value="Bacteria"/>
</dbReference>
<dbReference type="HOGENOM" id="CLU_123265_0_1_4"/>
<dbReference type="BioCyc" id="CTAI977880:RALTA_RS06055-MONOMER"/>
<dbReference type="Proteomes" id="UP000001692">
    <property type="component" value="Chromosome 1"/>
</dbReference>
<dbReference type="GO" id="GO:1990904">
    <property type="term" value="C:ribonucleoprotein complex"/>
    <property type="evidence" value="ECO:0007669"/>
    <property type="project" value="UniProtKB-KW"/>
</dbReference>
<dbReference type="GO" id="GO:0005840">
    <property type="term" value="C:ribosome"/>
    <property type="evidence" value="ECO:0007669"/>
    <property type="project" value="UniProtKB-KW"/>
</dbReference>
<dbReference type="GO" id="GO:0019843">
    <property type="term" value="F:rRNA binding"/>
    <property type="evidence" value="ECO:0007669"/>
    <property type="project" value="UniProtKB-UniRule"/>
</dbReference>
<dbReference type="GO" id="GO:0003735">
    <property type="term" value="F:structural constituent of ribosome"/>
    <property type="evidence" value="ECO:0007669"/>
    <property type="project" value="InterPro"/>
</dbReference>
<dbReference type="GO" id="GO:0000027">
    <property type="term" value="P:ribosomal large subunit assembly"/>
    <property type="evidence" value="ECO:0007669"/>
    <property type="project" value="UniProtKB-UniRule"/>
</dbReference>
<dbReference type="GO" id="GO:0006412">
    <property type="term" value="P:translation"/>
    <property type="evidence" value="ECO:0007669"/>
    <property type="project" value="InterPro"/>
</dbReference>
<dbReference type="CDD" id="cd07026">
    <property type="entry name" value="Ribosomal_L20"/>
    <property type="match status" value="1"/>
</dbReference>
<dbReference type="FunFam" id="1.10.1900.20:FF:000001">
    <property type="entry name" value="50S ribosomal protein L20"/>
    <property type="match status" value="1"/>
</dbReference>
<dbReference type="Gene3D" id="6.10.160.10">
    <property type="match status" value="1"/>
</dbReference>
<dbReference type="Gene3D" id="1.10.1900.20">
    <property type="entry name" value="Ribosomal protein L20"/>
    <property type="match status" value="1"/>
</dbReference>
<dbReference type="HAMAP" id="MF_00382">
    <property type="entry name" value="Ribosomal_bL20"/>
    <property type="match status" value="1"/>
</dbReference>
<dbReference type="InterPro" id="IPR005813">
    <property type="entry name" value="Ribosomal_bL20"/>
</dbReference>
<dbReference type="InterPro" id="IPR049946">
    <property type="entry name" value="RIBOSOMAL_L20_CS"/>
</dbReference>
<dbReference type="InterPro" id="IPR035566">
    <property type="entry name" value="Ribosomal_protein_bL20_C"/>
</dbReference>
<dbReference type="NCBIfam" id="TIGR01032">
    <property type="entry name" value="rplT_bact"/>
    <property type="match status" value="1"/>
</dbReference>
<dbReference type="PANTHER" id="PTHR10986">
    <property type="entry name" value="39S RIBOSOMAL PROTEIN L20"/>
    <property type="match status" value="1"/>
</dbReference>
<dbReference type="Pfam" id="PF00453">
    <property type="entry name" value="Ribosomal_L20"/>
    <property type="match status" value="1"/>
</dbReference>
<dbReference type="PRINTS" id="PR00062">
    <property type="entry name" value="RIBOSOMALL20"/>
</dbReference>
<dbReference type="SUPFAM" id="SSF74731">
    <property type="entry name" value="Ribosomal protein L20"/>
    <property type="match status" value="1"/>
</dbReference>
<dbReference type="PROSITE" id="PS00937">
    <property type="entry name" value="RIBOSOMAL_L20"/>
    <property type="match status" value="1"/>
</dbReference>
<proteinExistence type="inferred from homology"/>
<reference key="1">
    <citation type="journal article" date="2008" name="Genome Res.">
        <title>Genome sequence of the beta-rhizobium Cupriavidus taiwanensis and comparative genomics of rhizobia.</title>
        <authorList>
            <person name="Amadou C."/>
            <person name="Pascal G."/>
            <person name="Mangenot S."/>
            <person name="Glew M."/>
            <person name="Bontemps C."/>
            <person name="Capela D."/>
            <person name="Carrere S."/>
            <person name="Cruveiller S."/>
            <person name="Dossat C."/>
            <person name="Lajus A."/>
            <person name="Marchetti M."/>
            <person name="Poinsot V."/>
            <person name="Rouy Z."/>
            <person name="Servin B."/>
            <person name="Saad M."/>
            <person name="Schenowitz C."/>
            <person name="Barbe V."/>
            <person name="Batut J."/>
            <person name="Medigue C."/>
            <person name="Masson-Boivin C."/>
        </authorList>
    </citation>
    <scope>NUCLEOTIDE SEQUENCE [LARGE SCALE GENOMIC DNA]</scope>
    <source>
        <strain>DSM 17343 / BCRC 17206 / CCUG 44338 / CIP 107171 / LMG 19424 / R1</strain>
    </source>
</reference>
<feature type="chain" id="PRO_1000122301" description="Large ribosomal subunit protein bL20">
    <location>
        <begin position="1"/>
        <end position="118"/>
    </location>
</feature>
<protein>
    <recommendedName>
        <fullName evidence="1">Large ribosomal subunit protein bL20</fullName>
    </recommendedName>
    <alternativeName>
        <fullName evidence="2">50S ribosomal protein L20</fullName>
    </alternativeName>
</protein>
<gene>
    <name evidence="1" type="primary">rplT</name>
    <name type="ordered locus">RALTA_A1264</name>
</gene>
<keyword id="KW-0687">Ribonucleoprotein</keyword>
<keyword id="KW-0689">Ribosomal protein</keyword>
<keyword id="KW-0694">RNA-binding</keyword>
<keyword id="KW-0699">rRNA-binding</keyword>
<evidence type="ECO:0000255" key="1">
    <source>
        <dbReference type="HAMAP-Rule" id="MF_00382"/>
    </source>
</evidence>
<evidence type="ECO:0000305" key="2"/>
<comment type="function">
    <text evidence="1">Binds directly to 23S ribosomal RNA and is necessary for the in vitro assembly process of the 50S ribosomal subunit. It is not involved in the protein synthesizing functions of that subunit.</text>
</comment>
<comment type="similarity">
    <text evidence="1">Belongs to the bacterial ribosomal protein bL20 family.</text>
</comment>
<accession>B3R4J4</accession>
<organism>
    <name type="scientific">Cupriavidus taiwanensis (strain DSM 17343 / BCRC 17206 / CCUG 44338 / CIP 107171 / LMG 19424 / R1)</name>
    <name type="common">Ralstonia taiwanensis (strain LMG 19424)</name>
    <dbReference type="NCBI Taxonomy" id="977880"/>
    <lineage>
        <taxon>Bacteria</taxon>
        <taxon>Pseudomonadati</taxon>
        <taxon>Pseudomonadota</taxon>
        <taxon>Betaproteobacteria</taxon>
        <taxon>Burkholderiales</taxon>
        <taxon>Burkholderiaceae</taxon>
        <taxon>Cupriavidus</taxon>
    </lineage>
</organism>
<sequence>MPRVKRGVTARARHKKVIDAAKGYRGRRNNVYRIAKQAVMRAGQYAYRDRRNKKRVFRALWIARINAATREHGMTYSVFMNGLKKASIELDRKVLSDMAIHDKPAFAAIVNQVKATVA</sequence>
<name>RL20_CUPTR</name>